<feature type="chain" id="PRO_0000157290" description="Crystallin J1A">
    <location>
        <begin position="1"/>
        <end position="322"/>
    </location>
</feature>
<proteinExistence type="evidence at protein level"/>
<dbReference type="EMBL" id="L05524">
    <property type="protein sequence ID" value="AAA30106.1"/>
    <property type="molecule type" value="Genomic_DNA"/>
</dbReference>
<dbReference type="PIR" id="A46745">
    <property type="entry name" value="A46745"/>
</dbReference>
<dbReference type="SMR" id="Q03442"/>
<dbReference type="GO" id="GO:0005212">
    <property type="term" value="F:structural constituent of eye lens"/>
    <property type="evidence" value="ECO:0007669"/>
    <property type="project" value="UniProtKB-KW"/>
</dbReference>
<dbReference type="Gene3D" id="1.10.4080.10">
    <property type="entry name" value="ADP-ribosylation/Crystallin J1"/>
    <property type="match status" value="1"/>
</dbReference>
<dbReference type="InterPro" id="IPR050792">
    <property type="entry name" value="ADP-ribosylglycohydrolase"/>
</dbReference>
<dbReference type="InterPro" id="IPR005502">
    <property type="entry name" value="Ribosyl_crysJ1"/>
</dbReference>
<dbReference type="InterPro" id="IPR036705">
    <property type="entry name" value="Ribosyl_crysJ1_sf"/>
</dbReference>
<dbReference type="PANTHER" id="PTHR16222">
    <property type="entry name" value="ADP-RIBOSYLGLYCOHYDROLASE"/>
    <property type="match status" value="1"/>
</dbReference>
<dbReference type="PANTHER" id="PTHR16222:SF17">
    <property type="entry name" value="SELENOPROTEIN J"/>
    <property type="match status" value="1"/>
</dbReference>
<dbReference type="Pfam" id="PF03747">
    <property type="entry name" value="ADP_ribosyl_GH"/>
    <property type="match status" value="1"/>
</dbReference>
<dbReference type="SUPFAM" id="SSF101478">
    <property type="entry name" value="ADP-ribosylglycohydrolase"/>
    <property type="match status" value="1"/>
</dbReference>
<comment type="tissue specificity">
    <text>Expressed in the rhopalia. Present in both the large and small eyes.</text>
</comment>
<comment type="similarity">
    <text evidence="1">Belongs to the ADP-ribosylglycohydrolase family. J1 crystallin subfamily.</text>
</comment>
<protein>
    <recommendedName>
        <fullName>Crystallin J1A</fullName>
    </recommendedName>
</protein>
<organism>
    <name type="scientific">Tripedalia cystophora</name>
    <name type="common">Jellyfish</name>
    <dbReference type="NCBI Taxonomy" id="6141"/>
    <lineage>
        <taxon>Eukaryota</taxon>
        <taxon>Metazoa</taxon>
        <taxon>Cnidaria</taxon>
        <taxon>Cubozoa</taxon>
        <taxon>Carybdeida</taxon>
        <taxon>Tripedaliidae</taxon>
        <taxon>Tripedalia</taxon>
    </lineage>
</organism>
<name>CRJ1A_TRICY</name>
<accession>Q03442</accession>
<evidence type="ECO:0000305" key="1"/>
<reference key="1">
    <citation type="journal article" date="1993" name="J. Biol. Chem.">
        <title>J1-crystallins of the cubomedusan jellyfish lens constitute a novel family encoded in at least three intronless genes.</title>
        <authorList>
            <person name="Piatigorsky J."/>
            <person name="Horwitz J."/>
            <person name="Norman B.L."/>
        </authorList>
    </citation>
    <scope>NUCLEOTIDE SEQUENCE [GENOMIC DNA]</scope>
    <scope>PARTIAL PROTEIN SEQUENCE</scope>
    <source>
        <tissue>Lens</tissue>
    </source>
</reference>
<keyword id="KW-0903">Direct protein sequencing</keyword>
<keyword id="KW-0273">Eye lens protein</keyword>
<sequence length="322" mass="36911">MSSDQAKDRAKAAIVGSLVADAATQPVHWVYDHNRFYENFRNKSEPEFNSEWLNPYYRYDNGTFSIYGEQNYVLLKHLVENKGFNLKKYMDAYYRHFGPGTNYDQPQSRDRLPKQGPWRNEHITRALNKIQSGDQRSGTDVAECDSYAMITPLVAMYAGSGQLDSYVEQVVRVTLNNDRSVRTAQFFAKLLEHYILHGRDPEAFRKVLNNFPDDQYKFEWQKAYYDRDLSNNDAVRKYGSGCGLPGNFQGALHCVNRNEDYVSSVRTTIRSGGCNCPRACGVGAWVAAQYGSQCIPSNWISRTSRGNEIVQYAEQLSKMMKK</sequence>